<organism>
    <name type="scientific">Shewanella halifaxensis (strain HAW-EB4)</name>
    <dbReference type="NCBI Taxonomy" id="458817"/>
    <lineage>
        <taxon>Bacteria</taxon>
        <taxon>Pseudomonadati</taxon>
        <taxon>Pseudomonadota</taxon>
        <taxon>Gammaproteobacteria</taxon>
        <taxon>Alteromonadales</taxon>
        <taxon>Shewanellaceae</taxon>
        <taxon>Shewanella</taxon>
    </lineage>
</organism>
<reference key="1">
    <citation type="submission" date="2008-01" db="EMBL/GenBank/DDBJ databases">
        <title>Complete sequence of Shewanella halifaxensis HAW-EB4.</title>
        <authorList>
            <consortium name="US DOE Joint Genome Institute"/>
            <person name="Copeland A."/>
            <person name="Lucas S."/>
            <person name="Lapidus A."/>
            <person name="Glavina del Rio T."/>
            <person name="Dalin E."/>
            <person name="Tice H."/>
            <person name="Bruce D."/>
            <person name="Goodwin L."/>
            <person name="Pitluck S."/>
            <person name="Sims D."/>
            <person name="Brettin T."/>
            <person name="Detter J.C."/>
            <person name="Han C."/>
            <person name="Kuske C.R."/>
            <person name="Schmutz J."/>
            <person name="Larimer F."/>
            <person name="Land M."/>
            <person name="Hauser L."/>
            <person name="Kyrpides N."/>
            <person name="Kim E."/>
            <person name="Zhao J.-S."/>
            <person name="Richardson P."/>
        </authorList>
    </citation>
    <scope>NUCLEOTIDE SEQUENCE [LARGE SCALE GENOMIC DNA]</scope>
    <source>
        <strain>HAW-EB4</strain>
    </source>
</reference>
<accession>B0TQ99</accession>
<keyword id="KW-0687">Ribonucleoprotein</keyword>
<keyword id="KW-0689">Ribosomal protein</keyword>
<keyword id="KW-0694">RNA-binding</keyword>
<keyword id="KW-0699">rRNA-binding</keyword>
<protein>
    <recommendedName>
        <fullName evidence="1">Small ribosomal subunit protein uS15</fullName>
    </recommendedName>
    <alternativeName>
        <fullName evidence="2">30S ribosomal protein S15</fullName>
    </alternativeName>
</protein>
<gene>
    <name evidence="1" type="primary">rpsO</name>
    <name type="ordered locus">Shal_3144</name>
</gene>
<dbReference type="EMBL" id="CP000931">
    <property type="protein sequence ID" value="ABZ77691.1"/>
    <property type="molecule type" value="Genomic_DNA"/>
</dbReference>
<dbReference type="RefSeq" id="WP_012156278.1">
    <property type="nucleotide sequence ID" value="NC_010334.1"/>
</dbReference>
<dbReference type="SMR" id="B0TQ99"/>
<dbReference type="STRING" id="458817.Shal_3144"/>
<dbReference type="KEGG" id="shl:Shal_3144"/>
<dbReference type="eggNOG" id="COG0184">
    <property type="taxonomic scope" value="Bacteria"/>
</dbReference>
<dbReference type="HOGENOM" id="CLU_148518_0_0_6"/>
<dbReference type="OrthoDB" id="9799262at2"/>
<dbReference type="Proteomes" id="UP000001317">
    <property type="component" value="Chromosome"/>
</dbReference>
<dbReference type="GO" id="GO:0022627">
    <property type="term" value="C:cytosolic small ribosomal subunit"/>
    <property type="evidence" value="ECO:0007669"/>
    <property type="project" value="TreeGrafter"/>
</dbReference>
<dbReference type="GO" id="GO:0019843">
    <property type="term" value="F:rRNA binding"/>
    <property type="evidence" value="ECO:0007669"/>
    <property type="project" value="UniProtKB-UniRule"/>
</dbReference>
<dbReference type="GO" id="GO:0003735">
    <property type="term" value="F:structural constituent of ribosome"/>
    <property type="evidence" value="ECO:0007669"/>
    <property type="project" value="InterPro"/>
</dbReference>
<dbReference type="GO" id="GO:0006412">
    <property type="term" value="P:translation"/>
    <property type="evidence" value="ECO:0007669"/>
    <property type="project" value="UniProtKB-UniRule"/>
</dbReference>
<dbReference type="CDD" id="cd00353">
    <property type="entry name" value="Ribosomal_S15p_S13e"/>
    <property type="match status" value="1"/>
</dbReference>
<dbReference type="FunFam" id="1.10.287.10:FF:000002">
    <property type="entry name" value="30S ribosomal protein S15"/>
    <property type="match status" value="1"/>
</dbReference>
<dbReference type="Gene3D" id="6.10.250.3130">
    <property type="match status" value="1"/>
</dbReference>
<dbReference type="Gene3D" id="1.10.287.10">
    <property type="entry name" value="S15/NS1, RNA-binding"/>
    <property type="match status" value="1"/>
</dbReference>
<dbReference type="HAMAP" id="MF_01343_B">
    <property type="entry name" value="Ribosomal_uS15_B"/>
    <property type="match status" value="1"/>
</dbReference>
<dbReference type="InterPro" id="IPR000589">
    <property type="entry name" value="Ribosomal_uS15"/>
</dbReference>
<dbReference type="InterPro" id="IPR005290">
    <property type="entry name" value="Ribosomal_uS15_bac-type"/>
</dbReference>
<dbReference type="InterPro" id="IPR009068">
    <property type="entry name" value="uS15_NS1_RNA-bd_sf"/>
</dbReference>
<dbReference type="NCBIfam" id="TIGR00952">
    <property type="entry name" value="S15_bact"/>
    <property type="match status" value="1"/>
</dbReference>
<dbReference type="PANTHER" id="PTHR23321">
    <property type="entry name" value="RIBOSOMAL PROTEIN S15, BACTERIAL AND ORGANELLAR"/>
    <property type="match status" value="1"/>
</dbReference>
<dbReference type="PANTHER" id="PTHR23321:SF26">
    <property type="entry name" value="SMALL RIBOSOMAL SUBUNIT PROTEIN US15M"/>
    <property type="match status" value="1"/>
</dbReference>
<dbReference type="Pfam" id="PF00312">
    <property type="entry name" value="Ribosomal_S15"/>
    <property type="match status" value="1"/>
</dbReference>
<dbReference type="SMART" id="SM01387">
    <property type="entry name" value="Ribosomal_S15"/>
    <property type="match status" value="1"/>
</dbReference>
<dbReference type="SUPFAM" id="SSF47060">
    <property type="entry name" value="S15/NS1 RNA-binding domain"/>
    <property type="match status" value="1"/>
</dbReference>
<dbReference type="PROSITE" id="PS00362">
    <property type="entry name" value="RIBOSOMAL_S15"/>
    <property type="match status" value="1"/>
</dbReference>
<sequence>MSLSVEAKAQILAEFGRCENDTGSSEVQVALLTAQINHLQGHFKEHIHDHHSRRGLLRMVSTRRKLLAYLKRTENVRYQELIKKLGLRR</sequence>
<feature type="chain" id="PRO_1000086819" description="Small ribosomal subunit protein uS15">
    <location>
        <begin position="1"/>
        <end position="89"/>
    </location>
</feature>
<proteinExistence type="inferred from homology"/>
<evidence type="ECO:0000255" key="1">
    <source>
        <dbReference type="HAMAP-Rule" id="MF_01343"/>
    </source>
</evidence>
<evidence type="ECO:0000305" key="2"/>
<comment type="function">
    <text evidence="1">One of the primary rRNA binding proteins, it binds directly to 16S rRNA where it helps nucleate assembly of the platform of the 30S subunit by binding and bridging several RNA helices of the 16S rRNA.</text>
</comment>
<comment type="function">
    <text evidence="1">Forms an intersubunit bridge (bridge B4) with the 23S rRNA of the 50S subunit in the ribosome.</text>
</comment>
<comment type="subunit">
    <text evidence="1">Part of the 30S ribosomal subunit. Forms a bridge to the 50S subunit in the 70S ribosome, contacting the 23S rRNA.</text>
</comment>
<comment type="similarity">
    <text evidence="1">Belongs to the universal ribosomal protein uS15 family.</text>
</comment>
<name>RS15_SHEHH</name>